<name>1A15_ORYSJ</name>
<evidence type="ECO:0000250" key="1">
    <source>
        <dbReference type="UniProtKB" id="P37821"/>
    </source>
</evidence>
<evidence type="ECO:0000269" key="2">
    <source>
    </source>
</evidence>
<evidence type="ECO:0000269" key="3">
    <source>
    </source>
</evidence>
<evidence type="ECO:0000303" key="4">
    <source>
    </source>
</evidence>
<evidence type="ECO:0000305" key="5"/>
<evidence type="ECO:0000312" key="6">
    <source>
        <dbReference type="EMBL" id="BAB12704.1"/>
    </source>
</evidence>
<evidence type="ECO:0000312" key="7">
    <source>
        <dbReference type="EMBL" id="BAS70840.1"/>
    </source>
</evidence>
<keyword id="KW-0266">Ethylene biosynthesis</keyword>
<keyword id="KW-0456">Lyase</keyword>
<keyword id="KW-0663">Pyridoxal phosphate</keyword>
<keyword id="KW-1185">Reference proteome</keyword>
<keyword id="KW-0949">S-adenosyl-L-methionine</keyword>
<comment type="function">
    <text evidence="1">Catalyzes the formation of 1-aminocyclopropane-1-carboxylate, a direct precursor of ethylene in higher plants.</text>
</comment>
<comment type="catalytic activity">
    <reaction evidence="1">
        <text>S-adenosyl-L-methionine = 1-aminocyclopropane-1-carboxylate + S-methyl-5'-thioadenosine + H(+)</text>
        <dbReference type="Rhea" id="RHEA:21744"/>
        <dbReference type="ChEBI" id="CHEBI:15378"/>
        <dbReference type="ChEBI" id="CHEBI:17509"/>
        <dbReference type="ChEBI" id="CHEBI:58360"/>
        <dbReference type="ChEBI" id="CHEBI:59789"/>
        <dbReference type="EC" id="4.4.1.14"/>
    </reaction>
</comment>
<comment type="cofactor">
    <cofactor evidence="1">
        <name>pyridoxal 5'-phosphate</name>
        <dbReference type="ChEBI" id="CHEBI:597326"/>
    </cofactor>
</comment>
<comment type="pathway">
    <text evidence="5">Alkene biosynthesis; ethylene biosynthesis via S-adenosyl-L-methionine; ethylene from S-adenosyl-L-methionine: step 1/2.</text>
</comment>
<comment type="tissue specificity">
    <text evidence="2 3">Expressed in shoots and leaf blades (PubMed:30810167). Expressed at low levels in leaf sheaths (PubMed:30810167). Expressed in vasculature of roots and shoots (PubMed:12011339).</text>
</comment>
<comment type="developmental stage">
    <text evidence="2">During germination and leaf development, expressed in the new developing organs.</text>
</comment>
<comment type="induction">
    <text evidence="2">Induced by submergence.</text>
</comment>
<comment type="similarity">
    <text evidence="5">Belongs to the class-I pyridoxal-phosphate-dependent aminotransferase family.</text>
</comment>
<comment type="sequence caution" evidence="5">
    <conflict type="erroneous initiation">
        <sequence resource="EMBL-CDS" id="BAB12704"/>
    </conflict>
    <text>Truncated N-terminus.</text>
</comment>
<comment type="sequence caution" evidence="5">
    <conflict type="erroneous initiation">
        <sequence resource="EMBL-CDS" id="BAF04193"/>
    </conflict>
    <text>Truncated N-terminus.</text>
</comment>
<comment type="sequence caution" evidence="5">
    <conflict type="erroneous initiation">
        <sequence resource="EMBL-CDS" id="CAA65776"/>
    </conflict>
    <text>Truncated N-terminus.</text>
</comment>
<protein>
    <recommendedName>
        <fullName evidence="4">1-aminocyclopropane-1-carboxylate synthase 5</fullName>
        <shortName evidence="4">ACC synthase 5</shortName>
        <shortName evidence="4">OsACS5</shortName>
        <ecNumber evidence="1">4.4.1.14</ecNumber>
    </recommendedName>
</protein>
<gene>
    <name evidence="4" type="primary">ACS5</name>
    <name evidence="5" type="synonym">ACC5</name>
    <name evidence="7" type="ordered locus">Os01g0192900</name>
    <name evidence="5" type="ordered locus">LOC_Os01g09700</name>
    <name evidence="6" type="ORF">P0671B11.29</name>
</gene>
<feature type="chain" id="PRO_0000455672" description="1-aminocyclopropane-1-carboxylate synthase 5">
    <location>
        <begin position="1"/>
        <end position="533"/>
    </location>
</feature>
<feature type="modified residue" description="N6-(pyridoxal phosphate)lysine" evidence="1">
    <location>
        <position position="358"/>
    </location>
</feature>
<feature type="sequence conflict" description="In Ref. 1; CAA65776." evidence="5" ref="1">
    <original>A</original>
    <variation>S</variation>
    <location>
        <position position="94"/>
    </location>
</feature>
<feature type="sequence conflict" description="In Ref. 1; CAA65776." evidence="5" ref="1">
    <original>A</original>
    <variation>S</variation>
    <location>
        <position position="282"/>
    </location>
</feature>
<feature type="sequence conflict" description="In Ref. 1; CAA65776." evidence="5" ref="1">
    <original>D</original>
    <variation>G</variation>
    <location>
        <position position="344"/>
    </location>
</feature>
<feature type="sequence conflict" description="In Ref. 1; CAA65776." evidence="5" ref="1">
    <original>A</original>
    <variation>V</variation>
    <location>
        <position position="380"/>
    </location>
</feature>
<proteinExistence type="evidence at transcript level"/>
<organism>
    <name type="scientific">Oryza sativa subsp. japonica</name>
    <name type="common">Rice</name>
    <dbReference type="NCBI Taxonomy" id="39947"/>
    <lineage>
        <taxon>Eukaryota</taxon>
        <taxon>Viridiplantae</taxon>
        <taxon>Streptophyta</taxon>
        <taxon>Embryophyta</taxon>
        <taxon>Tracheophyta</taxon>
        <taxon>Spermatophyta</taxon>
        <taxon>Magnoliopsida</taxon>
        <taxon>Liliopsida</taxon>
        <taxon>Poales</taxon>
        <taxon>Poaceae</taxon>
        <taxon>BOP clade</taxon>
        <taxon>Oryzoideae</taxon>
        <taxon>Oryzeae</taxon>
        <taxon>Oryzinae</taxon>
        <taxon>Oryza</taxon>
        <taxon>Oryza sativa</taxon>
    </lineage>
</organism>
<accession>A0A0P0UZP7</accession>
<accession>O24220</accession>
<accession>Q9FU17</accession>
<dbReference type="EC" id="4.4.1.14" evidence="1"/>
<dbReference type="EMBL" id="X97066">
    <property type="protein sequence ID" value="CAA65776.1"/>
    <property type="status" value="ALT_INIT"/>
    <property type="molecule type" value="Genomic_DNA"/>
</dbReference>
<dbReference type="EMBL" id="AP002746">
    <property type="protein sequence ID" value="BAB12704.1"/>
    <property type="status" value="ALT_INIT"/>
    <property type="molecule type" value="Genomic_DNA"/>
</dbReference>
<dbReference type="EMBL" id="AP008207">
    <property type="protein sequence ID" value="BAF04193.1"/>
    <property type="status" value="ALT_INIT"/>
    <property type="molecule type" value="Genomic_DNA"/>
</dbReference>
<dbReference type="EMBL" id="AP014957">
    <property type="protein sequence ID" value="BAS70840.1"/>
    <property type="molecule type" value="Genomic_DNA"/>
</dbReference>
<dbReference type="PIR" id="T03414">
    <property type="entry name" value="T03414"/>
</dbReference>
<dbReference type="RefSeq" id="XP_015629495.1">
    <property type="nucleotide sequence ID" value="XM_015774009.1"/>
</dbReference>
<dbReference type="SMR" id="A0A0P0UZP7"/>
<dbReference type="FunCoup" id="A0A0P0UZP7">
    <property type="interactions" value="310"/>
</dbReference>
<dbReference type="STRING" id="39947.A0A0P0UZP7"/>
<dbReference type="PaxDb" id="39947-A0A0P0UZP7"/>
<dbReference type="KEGG" id="dosa:Os01g0192900"/>
<dbReference type="eggNOG" id="KOG0256">
    <property type="taxonomic scope" value="Eukaryota"/>
</dbReference>
<dbReference type="HOGENOM" id="CLU_017584_1_0_1"/>
<dbReference type="InParanoid" id="A0A0P0UZP7"/>
<dbReference type="OMA" id="HRISRFM"/>
<dbReference type="OrthoDB" id="691673at2759"/>
<dbReference type="PlantReactome" id="R-OSA-1119334">
    <property type="pathway name" value="Ethylene biosynthesis from methionine"/>
</dbReference>
<dbReference type="PlantReactome" id="R-OSA-1119624">
    <property type="pathway name" value="Methionine salvage pathway"/>
</dbReference>
<dbReference type="UniPathway" id="UPA00384">
    <property type="reaction ID" value="UER00562"/>
</dbReference>
<dbReference type="Proteomes" id="UP000000763">
    <property type="component" value="Chromosome 1"/>
</dbReference>
<dbReference type="Proteomes" id="UP000059680">
    <property type="component" value="Chromosome 1"/>
</dbReference>
<dbReference type="GO" id="GO:0016829">
    <property type="term" value="F:lyase activity"/>
    <property type="evidence" value="ECO:0007669"/>
    <property type="project" value="UniProtKB-KW"/>
</dbReference>
<dbReference type="GO" id="GO:0030170">
    <property type="term" value="F:pyridoxal phosphate binding"/>
    <property type="evidence" value="ECO:0007669"/>
    <property type="project" value="InterPro"/>
</dbReference>
<dbReference type="GO" id="GO:0008483">
    <property type="term" value="F:transaminase activity"/>
    <property type="evidence" value="ECO:0000318"/>
    <property type="project" value="GO_Central"/>
</dbReference>
<dbReference type="GO" id="GO:0006520">
    <property type="term" value="P:amino acid metabolic process"/>
    <property type="evidence" value="ECO:0000318"/>
    <property type="project" value="GO_Central"/>
</dbReference>
<dbReference type="GO" id="GO:0009693">
    <property type="term" value="P:ethylene biosynthetic process"/>
    <property type="evidence" value="ECO:0007669"/>
    <property type="project" value="UniProtKB-UniPathway"/>
</dbReference>
<dbReference type="CDD" id="cd00609">
    <property type="entry name" value="AAT_like"/>
    <property type="match status" value="1"/>
</dbReference>
<dbReference type="Gene3D" id="3.90.1150.10">
    <property type="entry name" value="Aspartate Aminotransferase, domain 1"/>
    <property type="match status" value="1"/>
</dbReference>
<dbReference type="Gene3D" id="3.40.640.10">
    <property type="entry name" value="Type I PLP-dependent aspartate aminotransferase-like (Major domain)"/>
    <property type="match status" value="1"/>
</dbReference>
<dbReference type="InterPro" id="IPR004839">
    <property type="entry name" value="Aminotransferase_I/II_large"/>
</dbReference>
<dbReference type="InterPro" id="IPR050478">
    <property type="entry name" value="Ethylene_sulfur-biosynth"/>
</dbReference>
<dbReference type="InterPro" id="IPR004838">
    <property type="entry name" value="NHTrfase_class1_PyrdxlP-BS"/>
</dbReference>
<dbReference type="InterPro" id="IPR015424">
    <property type="entry name" value="PyrdxlP-dep_Trfase"/>
</dbReference>
<dbReference type="InterPro" id="IPR015421">
    <property type="entry name" value="PyrdxlP-dep_Trfase_major"/>
</dbReference>
<dbReference type="InterPro" id="IPR015422">
    <property type="entry name" value="PyrdxlP-dep_Trfase_small"/>
</dbReference>
<dbReference type="PANTHER" id="PTHR43795:SF39">
    <property type="entry name" value="AMINOTRANSFERASE CLASS I_CLASSII DOMAIN-CONTAINING PROTEIN"/>
    <property type="match status" value="1"/>
</dbReference>
<dbReference type="PANTHER" id="PTHR43795">
    <property type="entry name" value="BIFUNCTIONAL ASPARTATE AMINOTRANSFERASE AND GLUTAMATE/ASPARTATE-PREPHENATE AMINOTRANSFERASE-RELATED"/>
    <property type="match status" value="1"/>
</dbReference>
<dbReference type="Pfam" id="PF00155">
    <property type="entry name" value="Aminotran_1_2"/>
    <property type="match status" value="1"/>
</dbReference>
<dbReference type="PRINTS" id="PR00753">
    <property type="entry name" value="ACCSYNTHASE"/>
</dbReference>
<dbReference type="SUPFAM" id="SSF53383">
    <property type="entry name" value="PLP-dependent transferases"/>
    <property type="match status" value="1"/>
</dbReference>
<dbReference type="PROSITE" id="PS00105">
    <property type="entry name" value="AA_TRANSFER_CLASS_1"/>
    <property type="match status" value="1"/>
</dbReference>
<reference key="1">
    <citation type="journal article" date="2002" name="Plant Physiol.">
        <title>Tissue localization of a submergence-induced 1-aminocyclopropane-1-carboxylic acid synthase in rice.</title>
        <authorList>
            <person name="Zhou Z."/>
            <person name="de Almeida Engler J."/>
            <person name="Rouan D."/>
            <person name="Michiels F."/>
            <person name="Van Montagu M."/>
            <person name="Van Der Straeten D."/>
        </authorList>
    </citation>
    <scope>NUCLEOTIDE SEQUENCE [MRNA]</scope>
    <scope>TISSUE SPECIFICITY</scope>
    <scope>DEVELOPMENTAL STAGE</scope>
    <scope>INDUCTION BY SUBMERGENCE</scope>
</reference>
<reference key="2">
    <citation type="journal article" date="2002" name="Nature">
        <title>The genome sequence and structure of rice chromosome 1.</title>
        <authorList>
            <person name="Sasaki T."/>
            <person name="Matsumoto T."/>
            <person name="Yamamoto K."/>
            <person name="Sakata K."/>
            <person name="Baba T."/>
            <person name="Katayose Y."/>
            <person name="Wu J."/>
            <person name="Niimura Y."/>
            <person name="Cheng Z."/>
            <person name="Nagamura Y."/>
            <person name="Antonio B.A."/>
            <person name="Kanamori H."/>
            <person name="Hosokawa S."/>
            <person name="Masukawa M."/>
            <person name="Arikawa K."/>
            <person name="Chiden Y."/>
            <person name="Hayashi M."/>
            <person name="Okamoto M."/>
            <person name="Ando T."/>
            <person name="Aoki H."/>
            <person name="Arita K."/>
            <person name="Hamada M."/>
            <person name="Harada C."/>
            <person name="Hijishita S."/>
            <person name="Honda M."/>
            <person name="Ichikawa Y."/>
            <person name="Idonuma A."/>
            <person name="Iijima M."/>
            <person name="Ikeda M."/>
            <person name="Ikeno M."/>
            <person name="Ito S."/>
            <person name="Ito T."/>
            <person name="Ito Y."/>
            <person name="Ito Y."/>
            <person name="Iwabuchi A."/>
            <person name="Kamiya K."/>
            <person name="Karasawa W."/>
            <person name="Katagiri S."/>
            <person name="Kikuta A."/>
            <person name="Kobayashi N."/>
            <person name="Kono I."/>
            <person name="Machita K."/>
            <person name="Maehara T."/>
            <person name="Mizuno H."/>
            <person name="Mizubayashi T."/>
            <person name="Mukai Y."/>
            <person name="Nagasaki H."/>
            <person name="Nakashima M."/>
            <person name="Nakama Y."/>
            <person name="Nakamichi Y."/>
            <person name="Nakamura M."/>
            <person name="Namiki N."/>
            <person name="Negishi M."/>
            <person name="Ohta I."/>
            <person name="Ono N."/>
            <person name="Saji S."/>
            <person name="Sakai K."/>
            <person name="Shibata M."/>
            <person name="Shimokawa T."/>
            <person name="Shomura A."/>
            <person name="Song J."/>
            <person name="Takazaki Y."/>
            <person name="Terasawa K."/>
            <person name="Tsuji K."/>
            <person name="Waki K."/>
            <person name="Yamagata H."/>
            <person name="Yamane H."/>
            <person name="Yoshiki S."/>
            <person name="Yoshihara R."/>
            <person name="Yukawa K."/>
            <person name="Zhong H."/>
            <person name="Iwama H."/>
            <person name="Endo T."/>
            <person name="Ito H."/>
            <person name="Hahn J.H."/>
            <person name="Kim H.-I."/>
            <person name="Eun M.-Y."/>
            <person name="Yano M."/>
            <person name="Jiang J."/>
            <person name="Gojobori T."/>
        </authorList>
    </citation>
    <scope>NUCLEOTIDE SEQUENCE [LARGE SCALE GENOMIC DNA]</scope>
    <source>
        <strain>cv. Nipponbare</strain>
    </source>
</reference>
<reference key="3">
    <citation type="journal article" date="2005" name="Nature">
        <title>The map-based sequence of the rice genome.</title>
        <authorList>
            <consortium name="International rice genome sequencing project (IRGSP)"/>
        </authorList>
    </citation>
    <scope>NUCLEOTIDE SEQUENCE [LARGE SCALE GENOMIC DNA]</scope>
    <source>
        <strain>cv. Nipponbare</strain>
    </source>
</reference>
<reference key="4">
    <citation type="journal article" date="2008" name="Nucleic Acids Res.">
        <title>The rice annotation project database (RAP-DB): 2008 update.</title>
        <authorList>
            <consortium name="The rice annotation project (RAP)"/>
        </authorList>
    </citation>
    <scope>GENOME REANNOTATION</scope>
    <source>
        <strain>cv. Nipponbare</strain>
    </source>
</reference>
<reference key="5">
    <citation type="journal article" date="2013" name="Rice">
        <title>Improvement of the Oryza sativa Nipponbare reference genome using next generation sequence and optical map data.</title>
        <authorList>
            <person name="Kawahara Y."/>
            <person name="de la Bastide M."/>
            <person name="Hamilton J.P."/>
            <person name="Kanamori H."/>
            <person name="McCombie W.R."/>
            <person name="Ouyang S."/>
            <person name="Schwartz D.C."/>
            <person name="Tanaka T."/>
            <person name="Wu J."/>
            <person name="Zhou S."/>
            <person name="Childs K.L."/>
            <person name="Davidson R.M."/>
            <person name="Lin H."/>
            <person name="Quesada-Ocampo L."/>
            <person name="Vaillancourt B."/>
            <person name="Sakai H."/>
            <person name="Lee S.S."/>
            <person name="Kim J."/>
            <person name="Numa H."/>
            <person name="Itoh T."/>
            <person name="Buell C.R."/>
            <person name="Matsumoto T."/>
        </authorList>
    </citation>
    <scope>GENOME REANNOTATION</scope>
    <source>
        <strain>cv. Nipponbare</strain>
    </source>
</reference>
<reference key="6">
    <citation type="journal article" date="2006" name="Plant Physiol.">
        <title>Contribution of ethylene biosynthesis for resistance to blast fungus infection in young rice plants.</title>
        <authorList>
            <person name="Iwai T."/>
            <person name="Miyasaka A."/>
            <person name="Seo S."/>
            <person name="Ohashi Y."/>
        </authorList>
    </citation>
    <scope>NOMENCLATURE</scope>
</reference>
<reference key="7">
    <citation type="journal article" date="2019" name="J. Exp. Bot.">
        <title>Editing of the OsACS locus alters phosphate deficiency-induced adaptive responses in rice seedlings.</title>
        <authorList>
            <person name="Lee H.Y."/>
            <person name="Chen Z."/>
            <person name="Zhang C."/>
            <person name="Yoon G.M."/>
        </authorList>
    </citation>
    <scope>TISSUE SPECIFICITY</scope>
</reference>
<sequence>MIMSGFHIGIYTSICLYIPLPHLEPWIISSHTPKNLNLLDCLLYCSVASYTAIAYKFCTARLIQSERTRENIMGGKLLPAAAFAGSAPPLSQVATSAAHGEDSPYFAGWKAYDEDPYHAVDNPDGVIQMGLAENQVSFDLLEAYLRDHPEAAGWSTGGAGAGSFRDNALFQDYHGLKSFRKAMASFMGKIRGGKARFDPDHIVLTAGATAANELLTFILANPGDALLIPTPYYPGFDRDLRWRTGVNIVPVRCDSANGFQVTVAALQAAYDEAAAVGMRARAVLITNPSNPLGTTVRRKMLDDILDFVSRNDIHLISDEIYSGSVFAAPDLVSVAELVEARGGDGIAGRVHIVYSLSKDLGLPGFRVGVVYSYNDAVVTAARRMSSFTLVSSQTQKTLAAMLSDEAFAGEYIRTNRRRLRERHEHVVAGLARAGVPCLRGNAGLFVWMDMRRLLLGGGGVGGELRLWEKLLRQAKLNISPGSSCHCSEAGWFRVCFANMSLDTLDLALHRISRFMDTWNGTKQQASCQQQEQQ</sequence>